<reference key="1">
    <citation type="journal article" date="2004" name="Proc. Natl. Acad. Sci. U.S.A.">
        <title>Structural flexibility in the Burkholderia mallei genome.</title>
        <authorList>
            <person name="Nierman W.C."/>
            <person name="DeShazer D."/>
            <person name="Kim H.S."/>
            <person name="Tettelin H."/>
            <person name="Nelson K.E."/>
            <person name="Feldblyum T.V."/>
            <person name="Ulrich R.L."/>
            <person name="Ronning C.M."/>
            <person name="Brinkac L.M."/>
            <person name="Daugherty S.C."/>
            <person name="Davidsen T.D."/>
            <person name="DeBoy R.T."/>
            <person name="Dimitrov G."/>
            <person name="Dodson R.J."/>
            <person name="Durkin A.S."/>
            <person name="Gwinn M.L."/>
            <person name="Haft D.H."/>
            <person name="Khouri H.M."/>
            <person name="Kolonay J.F."/>
            <person name="Madupu R."/>
            <person name="Mohammoud Y."/>
            <person name="Nelson W.C."/>
            <person name="Radune D."/>
            <person name="Romero C.M."/>
            <person name="Sarria S."/>
            <person name="Selengut J."/>
            <person name="Shamblin C."/>
            <person name="Sullivan S.A."/>
            <person name="White O."/>
            <person name="Yu Y."/>
            <person name="Zafar N."/>
            <person name="Zhou L."/>
            <person name="Fraser C.M."/>
        </authorList>
    </citation>
    <scope>NUCLEOTIDE SEQUENCE [LARGE SCALE GENOMIC DNA]</scope>
    <source>
        <strain>ATCC 23344</strain>
    </source>
</reference>
<proteinExistence type="inferred from homology"/>
<evidence type="ECO:0000250" key="1"/>
<evidence type="ECO:0000255" key="2">
    <source>
        <dbReference type="HAMAP-Rule" id="MF_00100"/>
    </source>
</evidence>
<evidence type="ECO:0000256" key="3">
    <source>
        <dbReference type="SAM" id="MobiDB-lite"/>
    </source>
</evidence>
<organism>
    <name type="scientific">Burkholderia mallei (strain ATCC 23344)</name>
    <dbReference type="NCBI Taxonomy" id="243160"/>
    <lineage>
        <taxon>Bacteria</taxon>
        <taxon>Pseudomonadati</taxon>
        <taxon>Pseudomonadota</taxon>
        <taxon>Betaproteobacteria</taxon>
        <taxon>Burkholderiales</taxon>
        <taxon>Burkholderiaceae</taxon>
        <taxon>Burkholderia</taxon>
        <taxon>pseudomallei group</taxon>
    </lineage>
</organism>
<protein>
    <recommendedName>
        <fullName evidence="2">Translation initiation factor IF-2</fullName>
    </recommendedName>
</protein>
<feature type="chain" id="PRO_0000228177" description="Translation initiation factor IF-2">
    <location>
        <begin position="1"/>
        <end position="975"/>
    </location>
</feature>
<feature type="domain" description="tr-type G">
    <location>
        <begin position="475"/>
        <end position="644"/>
    </location>
</feature>
<feature type="region of interest" description="Disordered" evidence="3">
    <location>
        <begin position="48"/>
        <end position="84"/>
    </location>
</feature>
<feature type="region of interest" description="Disordered" evidence="3">
    <location>
        <begin position="98"/>
        <end position="388"/>
    </location>
</feature>
<feature type="region of interest" description="G1" evidence="1">
    <location>
        <begin position="484"/>
        <end position="491"/>
    </location>
</feature>
<feature type="region of interest" description="G2" evidence="1">
    <location>
        <begin position="509"/>
        <end position="513"/>
    </location>
</feature>
<feature type="region of interest" description="G3" evidence="1">
    <location>
        <begin position="530"/>
        <end position="533"/>
    </location>
</feature>
<feature type="region of interest" description="G4" evidence="1">
    <location>
        <begin position="584"/>
        <end position="587"/>
    </location>
</feature>
<feature type="region of interest" description="G5" evidence="1">
    <location>
        <begin position="620"/>
        <end position="622"/>
    </location>
</feature>
<feature type="compositionally biased region" description="Basic and acidic residues" evidence="3">
    <location>
        <begin position="48"/>
        <end position="63"/>
    </location>
</feature>
<feature type="compositionally biased region" description="Low complexity" evidence="3">
    <location>
        <begin position="104"/>
        <end position="115"/>
    </location>
</feature>
<feature type="compositionally biased region" description="Basic and acidic residues" evidence="3">
    <location>
        <begin position="120"/>
        <end position="177"/>
    </location>
</feature>
<feature type="compositionally biased region" description="Low complexity" evidence="3">
    <location>
        <begin position="178"/>
        <end position="211"/>
    </location>
</feature>
<feature type="compositionally biased region" description="Basic and acidic residues" evidence="3">
    <location>
        <begin position="212"/>
        <end position="263"/>
    </location>
</feature>
<feature type="compositionally biased region" description="Low complexity" evidence="3">
    <location>
        <begin position="302"/>
        <end position="330"/>
    </location>
</feature>
<feature type="compositionally biased region" description="Gly residues" evidence="3">
    <location>
        <begin position="359"/>
        <end position="372"/>
    </location>
</feature>
<feature type="binding site" evidence="2">
    <location>
        <begin position="484"/>
        <end position="491"/>
    </location>
    <ligand>
        <name>GTP</name>
        <dbReference type="ChEBI" id="CHEBI:37565"/>
    </ligand>
</feature>
<feature type="binding site" evidence="2">
    <location>
        <begin position="530"/>
        <end position="534"/>
    </location>
    <ligand>
        <name>GTP</name>
        <dbReference type="ChEBI" id="CHEBI:37565"/>
    </ligand>
</feature>
<feature type="binding site" evidence="2">
    <location>
        <begin position="584"/>
        <end position="587"/>
    </location>
    <ligand>
        <name>GTP</name>
        <dbReference type="ChEBI" id="CHEBI:37565"/>
    </ligand>
</feature>
<dbReference type="EMBL" id="CP000010">
    <property type="protein sequence ID" value="AAU48841.1"/>
    <property type="molecule type" value="Genomic_DNA"/>
</dbReference>
<dbReference type="RefSeq" id="WP_004197388.1">
    <property type="nucleotide sequence ID" value="NC_006348.1"/>
</dbReference>
<dbReference type="RefSeq" id="YP_102760.1">
    <property type="nucleotide sequence ID" value="NC_006348.1"/>
</dbReference>
<dbReference type="SMR" id="Q62KK9"/>
<dbReference type="GeneID" id="92978809"/>
<dbReference type="KEGG" id="bma:BMA1061"/>
<dbReference type="PATRIC" id="fig|243160.12.peg.1097"/>
<dbReference type="eggNOG" id="COG0532">
    <property type="taxonomic scope" value="Bacteria"/>
</dbReference>
<dbReference type="HOGENOM" id="CLU_006301_6_0_4"/>
<dbReference type="Proteomes" id="UP000006693">
    <property type="component" value="Chromosome 1"/>
</dbReference>
<dbReference type="GO" id="GO:0005829">
    <property type="term" value="C:cytosol"/>
    <property type="evidence" value="ECO:0007669"/>
    <property type="project" value="TreeGrafter"/>
</dbReference>
<dbReference type="GO" id="GO:0005525">
    <property type="term" value="F:GTP binding"/>
    <property type="evidence" value="ECO:0007669"/>
    <property type="project" value="UniProtKB-KW"/>
</dbReference>
<dbReference type="GO" id="GO:0003924">
    <property type="term" value="F:GTPase activity"/>
    <property type="evidence" value="ECO:0007669"/>
    <property type="project" value="UniProtKB-UniRule"/>
</dbReference>
<dbReference type="GO" id="GO:0097216">
    <property type="term" value="F:guanosine tetraphosphate binding"/>
    <property type="evidence" value="ECO:0007669"/>
    <property type="project" value="UniProtKB-ARBA"/>
</dbReference>
<dbReference type="GO" id="GO:0003743">
    <property type="term" value="F:translation initiation factor activity"/>
    <property type="evidence" value="ECO:0007669"/>
    <property type="project" value="UniProtKB-UniRule"/>
</dbReference>
<dbReference type="CDD" id="cd01887">
    <property type="entry name" value="IF2_eIF5B"/>
    <property type="match status" value="1"/>
</dbReference>
<dbReference type="CDD" id="cd03702">
    <property type="entry name" value="IF2_mtIF2_II"/>
    <property type="match status" value="1"/>
</dbReference>
<dbReference type="CDD" id="cd03692">
    <property type="entry name" value="mtIF2_IVc"/>
    <property type="match status" value="1"/>
</dbReference>
<dbReference type="FunFam" id="2.40.30.10:FF:000007">
    <property type="entry name" value="Translation initiation factor IF-2"/>
    <property type="match status" value="1"/>
</dbReference>
<dbReference type="FunFam" id="2.40.30.10:FF:000008">
    <property type="entry name" value="Translation initiation factor IF-2"/>
    <property type="match status" value="1"/>
</dbReference>
<dbReference type="FunFam" id="3.40.50.10050:FF:000001">
    <property type="entry name" value="Translation initiation factor IF-2"/>
    <property type="match status" value="1"/>
</dbReference>
<dbReference type="FunFam" id="3.40.50.300:FF:000019">
    <property type="entry name" value="Translation initiation factor IF-2"/>
    <property type="match status" value="1"/>
</dbReference>
<dbReference type="Gene3D" id="3.40.50.300">
    <property type="entry name" value="P-loop containing nucleotide triphosphate hydrolases"/>
    <property type="match status" value="1"/>
</dbReference>
<dbReference type="Gene3D" id="3.30.56.50">
    <property type="entry name" value="Putative DNA-binding domain, N-terminal subdomain of bacterial translation initiation factor IF2"/>
    <property type="match status" value="1"/>
</dbReference>
<dbReference type="Gene3D" id="2.40.30.10">
    <property type="entry name" value="Translation factors"/>
    <property type="match status" value="2"/>
</dbReference>
<dbReference type="Gene3D" id="3.40.50.10050">
    <property type="entry name" value="Translation initiation factor IF- 2, domain 3"/>
    <property type="match status" value="1"/>
</dbReference>
<dbReference type="HAMAP" id="MF_00100_B">
    <property type="entry name" value="IF_2_B"/>
    <property type="match status" value="1"/>
</dbReference>
<dbReference type="InterPro" id="IPR009061">
    <property type="entry name" value="DNA-bd_dom_put_sf"/>
</dbReference>
<dbReference type="InterPro" id="IPR053905">
    <property type="entry name" value="EF-G-like_DII"/>
</dbReference>
<dbReference type="InterPro" id="IPR004161">
    <property type="entry name" value="EFTu-like_2"/>
</dbReference>
<dbReference type="InterPro" id="IPR013575">
    <property type="entry name" value="IF2_assoc_dom_bac"/>
</dbReference>
<dbReference type="InterPro" id="IPR044145">
    <property type="entry name" value="IF2_II"/>
</dbReference>
<dbReference type="InterPro" id="IPR006847">
    <property type="entry name" value="IF2_N"/>
</dbReference>
<dbReference type="InterPro" id="IPR027417">
    <property type="entry name" value="P-loop_NTPase"/>
</dbReference>
<dbReference type="InterPro" id="IPR005225">
    <property type="entry name" value="Small_GTP-bd"/>
</dbReference>
<dbReference type="InterPro" id="IPR000795">
    <property type="entry name" value="T_Tr_GTP-bd_dom"/>
</dbReference>
<dbReference type="InterPro" id="IPR000178">
    <property type="entry name" value="TF_IF2_bacterial-like"/>
</dbReference>
<dbReference type="InterPro" id="IPR015760">
    <property type="entry name" value="TIF_IF2"/>
</dbReference>
<dbReference type="InterPro" id="IPR023115">
    <property type="entry name" value="TIF_IF2_dom3"/>
</dbReference>
<dbReference type="InterPro" id="IPR036925">
    <property type="entry name" value="TIF_IF2_dom3_sf"/>
</dbReference>
<dbReference type="InterPro" id="IPR009000">
    <property type="entry name" value="Transl_B-barrel_sf"/>
</dbReference>
<dbReference type="NCBIfam" id="TIGR00487">
    <property type="entry name" value="IF-2"/>
    <property type="match status" value="1"/>
</dbReference>
<dbReference type="NCBIfam" id="TIGR00231">
    <property type="entry name" value="small_GTP"/>
    <property type="match status" value="1"/>
</dbReference>
<dbReference type="PANTHER" id="PTHR43381:SF5">
    <property type="entry name" value="TR-TYPE G DOMAIN-CONTAINING PROTEIN"/>
    <property type="match status" value="1"/>
</dbReference>
<dbReference type="PANTHER" id="PTHR43381">
    <property type="entry name" value="TRANSLATION INITIATION FACTOR IF-2-RELATED"/>
    <property type="match status" value="1"/>
</dbReference>
<dbReference type="Pfam" id="PF22042">
    <property type="entry name" value="EF-G_D2"/>
    <property type="match status" value="1"/>
</dbReference>
<dbReference type="Pfam" id="PF00009">
    <property type="entry name" value="GTP_EFTU"/>
    <property type="match status" value="1"/>
</dbReference>
<dbReference type="Pfam" id="PF03144">
    <property type="entry name" value="GTP_EFTU_D2"/>
    <property type="match status" value="1"/>
</dbReference>
<dbReference type="Pfam" id="PF11987">
    <property type="entry name" value="IF-2"/>
    <property type="match status" value="1"/>
</dbReference>
<dbReference type="Pfam" id="PF08364">
    <property type="entry name" value="IF2_assoc"/>
    <property type="match status" value="1"/>
</dbReference>
<dbReference type="Pfam" id="PF04760">
    <property type="entry name" value="IF2_N"/>
    <property type="match status" value="2"/>
</dbReference>
<dbReference type="SUPFAM" id="SSF52156">
    <property type="entry name" value="Initiation factor IF2/eIF5b, domain 3"/>
    <property type="match status" value="1"/>
</dbReference>
<dbReference type="SUPFAM" id="SSF52540">
    <property type="entry name" value="P-loop containing nucleoside triphosphate hydrolases"/>
    <property type="match status" value="1"/>
</dbReference>
<dbReference type="SUPFAM" id="SSF46955">
    <property type="entry name" value="Putative DNA-binding domain"/>
    <property type="match status" value="1"/>
</dbReference>
<dbReference type="SUPFAM" id="SSF50447">
    <property type="entry name" value="Translation proteins"/>
    <property type="match status" value="2"/>
</dbReference>
<dbReference type="PROSITE" id="PS51722">
    <property type="entry name" value="G_TR_2"/>
    <property type="match status" value="1"/>
</dbReference>
<dbReference type="PROSITE" id="PS01176">
    <property type="entry name" value="IF2"/>
    <property type="match status" value="1"/>
</dbReference>
<accession>Q62KK9</accession>
<gene>
    <name evidence="2" type="primary">infB</name>
    <name type="ordered locus">BMA1061</name>
</gene>
<sequence>MASNNVAQFAAELKMPAGVLLEQLQAAGVQKASEDDALSETDKARLLDHLRKSHGATDGDKRKITLTRRHTSEIKQADATGKARTIQVEVRKKRTFVKRDDVSETGADQAQAQTDEQAEAELKRREEEARREAELLEKQAQELRERQERLEREEAERRAREEAAEAERRRAEEEAAAKRAAAAQAEAAQQAAAAREQAQRAQSEPAEQSAQDEARAAAERAAQREAAKKAEDAAREAADKARAEQEEIRKRREAAEAEARAIREMMNTPRRAQVKAVEPPKPAEPPAAKAAEAKGTLHKPAKPAGEAAAARPAAKKPASGAPAPAAAPAGDRTKKPGTGKSGWQDDAAKRRGIKTRGDSSGGVDRGWRGGPKGRGKHQDSASSFQAPTEPIVREVHVPETISVADLAHKMSIKASEVIKVMMKMGQMVTINQVLDQETAMIVVEELGHRALAAKLDDPEALLVEGEIGSDAEQLPRPPVVTVMGHVDHGKTSLLDYIRRAKVAAGEAGGITQHIGAYHVETPRGVVTFLDTPGHEAFTAMRARGAKATDIVILVVAADDGVMPQTKEAISHAKAGGVPIVVAINKIDKPEANPDRVKQELVAEGVVPEEYGGDSPFVPVSAKTGAGIDDLLENVLLQAEVLELKAPVESPAKGIVIEAKLDKGKGPVATVLVQSGTLSRGDVVLAGTAYGRVRAMLDENGKPTKEAGPSIPVEIQGLSEVPGAGDEVIVLPDERKAREIALFRQGKFRDVKLAKQQAAKLESMLEQMGEGEVQNLPLIIKADVQGSQEALVQSLLKLSTDEVRVQIVHSAVGGISESDVNLATASKAVIIGFNTRADAQARKLAEANGIDIRYYNIIYDAVDEVKAAMSGMLAPEKREVVTGMVEVRQVFKVPKVGTVAGCMVTDGVVKRSSSVRVLRNNVVIFTGELDSLKRFKDDVKEVKQGFECGMSLKNFNDIVEGDQFEVFEVTEVARTL</sequence>
<keyword id="KW-0963">Cytoplasm</keyword>
<keyword id="KW-0342">GTP-binding</keyword>
<keyword id="KW-0396">Initiation factor</keyword>
<keyword id="KW-0547">Nucleotide-binding</keyword>
<keyword id="KW-0648">Protein biosynthesis</keyword>
<keyword id="KW-1185">Reference proteome</keyword>
<comment type="function">
    <text evidence="2">One of the essential components for the initiation of protein synthesis. Protects formylmethionyl-tRNA from spontaneous hydrolysis and promotes its binding to the 30S ribosomal subunits. Also involved in the hydrolysis of GTP during the formation of the 70S ribosomal complex.</text>
</comment>
<comment type="subcellular location">
    <subcellularLocation>
        <location evidence="2">Cytoplasm</location>
    </subcellularLocation>
</comment>
<comment type="similarity">
    <text evidence="2">Belongs to the TRAFAC class translation factor GTPase superfamily. Classic translation factor GTPase family. IF-2 subfamily.</text>
</comment>
<name>IF2_BURMA</name>